<comment type="function">
    <text evidence="1">ATP-dependent carboxylate-amine ligase which exhibits weak glutamate--cysteine ligase activity.</text>
</comment>
<comment type="catalytic activity">
    <reaction evidence="1">
        <text>L-cysteine + L-glutamate + ATP = gamma-L-glutamyl-L-cysteine + ADP + phosphate + H(+)</text>
        <dbReference type="Rhea" id="RHEA:13285"/>
        <dbReference type="ChEBI" id="CHEBI:15378"/>
        <dbReference type="ChEBI" id="CHEBI:29985"/>
        <dbReference type="ChEBI" id="CHEBI:30616"/>
        <dbReference type="ChEBI" id="CHEBI:35235"/>
        <dbReference type="ChEBI" id="CHEBI:43474"/>
        <dbReference type="ChEBI" id="CHEBI:58173"/>
        <dbReference type="ChEBI" id="CHEBI:456216"/>
        <dbReference type="EC" id="6.3.2.2"/>
    </reaction>
</comment>
<comment type="similarity">
    <text evidence="1">Belongs to the glutamate--cysteine ligase type 2 family. YbdK subfamily.</text>
</comment>
<gene>
    <name type="ordered locus">lpp2776</name>
</gene>
<organism>
    <name type="scientific">Legionella pneumophila (strain Paris)</name>
    <dbReference type="NCBI Taxonomy" id="297246"/>
    <lineage>
        <taxon>Bacteria</taxon>
        <taxon>Pseudomonadati</taxon>
        <taxon>Pseudomonadota</taxon>
        <taxon>Gammaproteobacteria</taxon>
        <taxon>Legionellales</taxon>
        <taxon>Legionellaceae</taxon>
        <taxon>Legionella</taxon>
    </lineage>
</organism>
<dbReference type="EC" id="6.3.2.2" evidence="1"/>
<dbReference type="EMBL" id="CR628336">
    <property type="protein sequence ID" value="CAH13929.1"/>
    <property type="molecule type" value="Genomic_DNA"/>
</dbReference>
<dbReference type="RefSeq" id="WP_015961775.1">
    <property type="nucleotide sequence ID" value="NC_006368.1"/>
</dbReference>
<dbReference type="SMR" id="Q5X1G7"/>
<dbReference type="KEGG" id="lpp:lpp2776"/>
<dbReference type="LegioList" id="lpp2776"/>
<dbReference type="HOGENOM" id="CLU_044848_1_1_6"/>
<dbReference type="GO" id="GO:0005524">
    <property type="term" value="F:ATP binding"/>
    <property type="evidence" value="ECO:0007669"/>
    <property type="project" value="UniProtKB-KW"/>
</dbReference>
<dbReference type="GO" id="GO:0004357">
    <property type="term" value="F:glutamate-cysteine ligase activity"/>
    <property type="evidence" value="ECO:0007669"/>
    <property type="project" value="UniProtKB-EC"/>
</dbReference>
<dbReference type="GO" id="GO:0042398">
    <property type="term" value="P:modified amino acid biosynthetic process"/>
    <property type="evidence" value="ECO:0007669"/>
    <property type="project" value="InterPro"/>
</dbReference>
<dbReference type="Gene3D" id="3.30.590.20">
    <property type="match status" value="1"/>
</dbReference>
<dbReference type="HAMAP" id="MF_01609">
    <property type="entry name" value="Glu_cys_ligase_2"/>
    <property type="match status" value="1"/>
</dbReference>
<dbReference type="InterPro" id="IPR050141">
    <property type="entry name" value="GCL_type2/YbdK_subfam"/>
</dbReference>
<dbReference type="InterPro" id="IPR006336">
    <property type="entry name" value="GCS2"/>
</dbReference>
<dbReference type="InterPro" id="IPR014746">
    <property type="entry name" value="Gln_synth/guanido_kin_cat_dom"/>
</dbReference>
<dbReference type="InterPro" id="IPR011793">
    <property type="entry name" value="YbdK"/>
</dbReference>
<dbReference type="NCBIfam" id="TIGR02050">
    <property type="entry name" value="gshA_cyan_rel"/>
    <property type="match status" value="1"/>
</dbReference>
<dbReference type="NCBIfam" id="NF010040">
    <property type="entry name" value="PRK13516.1"/>
    <property type="match status" value="1"/>
</dbReference>
<dbReference type="PANTHER" id="PTHR36510">
    <property type="entry name" value="GLUTAMATE--CYSTEINE LIGASE 2-RELATED"/>
    <property type="match status" value="1"/>
</dbReference>
<dbReference type="PANTHER" id="PTHR36510:SF1">
    <property type="entry name" value="GLUTAMATE--CYSTEINE LIGASE 2-RELATED"/>
    <property type="match status" value="1"/>
</dbReference>
<dbReference type="Pfam" id="PF04107">
    <property type="entry name" value="GCS2"/>
    <property type="match status" value="1"/>
</dbReference>
<dbReference type="SUPFAM" id="SSF55931">
    <property type="entry name" value="Glutamine synthetase/guanido kinase"/>
    <property type="match status" value="1"/>
</dbReference>
<proteinExistence type="inferred from homology"/>
<feature type="chain" id="PRO_0000218201" description="Putative glutamate--cysteine ligase 2-2">
    <location>
        <begin position="1"/>
        <end position="383"/>
    </location>
</feature>
<sequence>MRLLSFKKSKIVSIGTELEFQIIDCSSLSLVSRSKELMRALKDMRYRDQIKPEITQSMIEINSSIHQSAKEMYDELLELQKILVETAASIDIAFCGGGTHPFQQWTMQKIFPSKRFKKKFNQYRYLSKRATVFGQHIHIGCPTGDDAIYLTHALARYVPHFIAISASSPFYLGINTNYCSSRSTIFNAFPLSGVIPYLRSWQEFSDYYRKMYRWKIIENMKDFYWDIRPKPELGTIEIRVCDTPLTLRKSILITAYIQALALYLLEERPVQLSHDLYYVYNYNRFQASRHGLEGELTVTDKDRPIPIMDDILETIKKIEQYINGLGNGEYIEELCSDVINKQNDSVLINKIYKQDGSFSKLVAAQCELWLSDSKDRKWMTQPS</sequence>
<accession>Q5X1G7</accession>
<name>GCS22_LEGPA</name>
<protein>
    <recommendedName>
        <fullName evidence="1">Putative glutamate--cysteine ligase 2-2</fullName>
        <ecNumber evidence="1">6.3.2.2</ecNumber>
    </recommendedName>
    <alternativeName>
        <fullName evidence="1">Gamma-glutamylcysteine synthetase 2-2</fullName>
        <shortName evidence="1">GCS 2-2</shortName>
        <shortName evidence="1">Gamma-GCS 2-2</shortName>
    </alternativeName>
</protein>
<keyword id="KW-0067">ATP-binding</keyword>
<keyword id="KW-0436">Ligase</keyword>
<keyword id="KW-0547">Nucleotide-binding</keyword>
<reference key="1">
    <citation type="journal article" date="2004" name="Nat. Genet.">
        <title>Evidence in the Legionella pneumophila genome for exploitation of host cell functions and high genome plasticity.</title>
        <authorList>
            <person name="Cazalet C."/>
            <person name="Rusniok C."/>
            <person name="Brueggemann H."/>
            <person name="Zidane N."/>
            <person name="Magnier A."/>
            <person name="Ma L."/>
            <person name="Tichit M."/>
            <person name="Jarraud S."/>
            <person name="Bouchier C."/>
            <person name="Vandenesch F."/>
            <person name="Kunst F."/>
            <person name="Etienne J."/>
            <person name="Glaser P."/>
            <person name="Buchrieser C."/>
        </authorList>
    </citation>
    <scope>NUCLEOTIDE SEQUENCE [LARGE SCALE GENOMIC DNA]</scope>
    <source>
        <strain>Paris</strain>
    </source>
</reference>
<evidence type="ECO:0000255" key="1">
    <source>
        <dbReference type="HAMAP-Rule" id="MF_01609"/>
    </source>
</evidence>